<feature type="chain" id="PRO_0000453871" description="Short chain dehydrogenase ausT">
    <location>
        <begin position="1"/>
        <end position="411"/>
    </location>
</feature>
<feature type="active site" description="Proton donor" evidence="2">
    <location>
        <position position="249"/>
    </location>
</feature>
<feature type="active site" description="Proton donor" evidence="2">
    <location>
        <position position="263"/>
    </location>
</feature>
<feature type="binding site" evidence="1">
    <location>
        <position position="105"/>
    </location>
    <ligand>
        <name>NADP(+)</name>
        <dbReference type="ChEBI" id="CHEBI:58349"/>
    </ligand>
</feature>
<feature type="binding site" evidence="2">
    <location>
        <position position="137"/>
    </location>
    <ligand>
        <name>NADP(+)</name>
        <dbReference type="ChEBI" id="CHEBI:58349"/>
    </ligand>
</feature>
<feature type="binding site" evidence="2">
    <location>
        <position position="249"/>
    </location>
    <ligand>
        <name>NADP(+)</name>
        <dbReference type="ChEBI" id="CHEBI:58349"/>
    </ligand>
</feature>
<feature type="binding site" evidence="2">
    <location>
        <position position="253"/>
    </location>
    <ligand>
        <name>NADP(+)</name>
        <dbReference type="ChEBI" id="CHEBI:58349"/>
    </ligand>
</feature>
<evidence type="ECO:0000250" key="1">
    <source>
        <dbReference type="UniProtKB" id="L0E2Z4"/>
    </source>
</evidence>
<evidence type="ECO:0000250" key="2">
    <source>
        <dbReference type="UniProtKB" id="O93868"/>
    </source>
</evidence>
<evidence type="ECO:0000250" key="3">
    <source>
        <dbReference type="UniProtKB" id="Q5ATJ7"/>
    </source>
</evidence>
<evidence type="ECO:0000269" key="4">
    <source>
    </source>
</evidence>
<evidence type="ECO:0000269" key="5">
    <source>
    </source>
</evidence>
<evidence type="ECO:0000303" key="6">
    <source>
    </source>
</evidence>
<evidence type="ECO:0000305" key="7"/>
<evidence type="ECO:0000305" key="8">
    <source>
    </source>
</evidence>
<accession>A0A0U5GGX2</accession>
<protein>
    <recommendedName>
        <fullName evidence="6">Short chain dehydrogenase ausT</fullName>
        <ecNumber evidence="4">1.1.1.-</ecNumber>
    </recommendedName>
    <alternativeName>
        <fullName evidence="6">Austinoid biosynthesis cluster protein T</fullName>
    </alternativeName>
</protein>
<comment type="function">
    <text evidence="3 4 5">Short chain dehydrogenase; part of the gene cluster that mediates the biosynthesis of calidodehydroaustin, a fungal meroterpenoid (PubMed:28233494, PubMed:29076725). The first step of the pathway is the synthesis of 3,5-dimethylorsellinic acid by the polyketide synthase ausA (PubMed:28233494). 3,5-dimethylorsellinic acid is then prenylated by the polyprenyl transferase ausN (PubMed:28233494). Further epoxidation by the FAD-dependent monooxygenase ausM and cyclization by the probable terpene cyclase ausL lead to the formation of protoaustinoid A (By similarity). Protoaustinoid A is then oxidized to spiro-lactone preaustinoid A3 by the combined action of the FAD-binding monooxygenases ausB and ausC, and the dioxygenase ausE (By similarity). Acid-catalyzed keto-rearrangement and ring contraction of the tetraketide portion of preaustinoid A3 by ausJ lead to the formation of preaustinoid A4 (By similarity). The aldo-keto reductase ausK, with the help of ausH, is involved in the next step by transforming preaustinoid A4 into isoaustinone which is in turn hydroxylated by the P450 monooxygenase ausI to form austinolide (By similarity). The cytochrome P450 monooxygenase ausG modifies austinolide to austinol (By similarity). Austinol is further acetylated to austin by the O-acetyltransferase ausP, which spontaneously changes to dehydroaustin (PubMed:28233494). The cytochrome P450 monooxygenase ausR then converts dehydroaustin is into 7-dehydrodehydroaustin (PubMed:28233494). The hydroxylation catalyzed by ausR permits the O-acetyltransferase ausQ to add an additional acetyl group to the molecule, leading to the formation of acetoxydehydroaustin (PubMed:28233494). The short chain dehydrogenase ausT catalyzes the reduction of the double bond present between carbon atoms 1 and 2 to convert 7-dehydrodehydroaustin into 1,2-dihydro-7-hydroxydehydroaustin (PubMed:28233494). AusQ catalyzes not only an acetylation reaction but also the addition of the PKS ausV diketide product to 1,2-dihydro-7-hydroxydehydroaustin, forming precalidodehydroaustin (PubMed:28233494). Finally, the iron/alpha-ketoglutarate-dependent dioxygenase converts precalidodehydroaustin into calidodehydroaustin (PubMed:28233494).</text>
</comment>
<comment type="pathway">
    <text evidence="4">Secondary metabolite biosynthesis; terpenoid biosynthesis.</text>
</comment>
<comment type="miscellaneous">
    <text evidence="8">In A.calidoustus, the austinoid gene cluster lies on a contiguous DNA region, while clusters from E.nidulans and P.brasilianum are split in their respective genomes. Genetic rearrangements provoked variability among the clusters and E.nidulans produces the least number of austionoid derivatives with the end products austinol and dehydroaustinol, while P.brasilianum can produce until acetoxydehydroaustin, and A.calidoustus produces the highest number of identified derivatives.</text>
</comment>
<comment type="similarity">
    <text evidence="7">Belongs to the short-chain dehydrogenases/reductases (SDR) family.</text>
</comment>
<reference key="1">
    <citation type="journal article" date="2016" name="Genome Announc.">
        <title>Draft genome sequences of fungus Aspergillus calidoustus.</title>
        <authorList>
            <person name="Horn F."/>
            <person name="Linde J."/>
            <person name="Mattern D.J."/>
            <person name="Walther G."/>
            <person name="Guthke R."/>
            <person name="Scherlach K."/>
            <person name="Martin K."/>
            <person name="Brakhage A.A."/>
            <person name="Petzke L."/>
            <person name="Valiante V."/>
        </authorList>
    </citation>
    <scope>NUCLEOTIDE SEQUENCE [LARGE SCALE GENOMIC DNA]</scope>
    <source>
        <strain>SF006504</strain>
    </source>
</reference>
<reference key="2">
    <citation type="journal article" date="2017" name="ACS Chem. Biol.">
        <title>Discovery of an Extended Austinoid Biosynthetic Pathway in Aspergillus calidoustus.</title>
        <authorList>
            <person name="Valiante V."/>
            <person name="Mattern D.J."/>
            <person name="Schueffler A."/>
            <person name="Horn F."/>
            <person name="Walther G."/>
            <person name="Scherlach K."/>
            <person name="Petzke L."/>
            <person name="Dickhaut J."/>
            <person name="Guthke R."/>
            <person name="Hertweck C."/>
            <person name="Nett M."/>
            <person name="Thines E."/>
            <person name="Brakhage A.A."/>
        </authorList>
    </citation>
    <scope>FUNCTION</scope>
    <scope>CATALYTIC ACTIVITY</scope>
    <scope>PATHWAY</scope>
</reference>
<reference key="3">
    <citation type="journal article" date="2017" name="ACS Chem. Biol.">
        <title>Rewiring of the austinoid biosynthetic pathway in filamentous fungi.</title>
        <authorList>
            <person name="Mattern D.J."/>
            <person name="Valiante V."/>
            <person name="Horn F."/>
            <person name="Petzke L."/>
            <person name="Brakhage A.A."/>
        </authorList>
    </citation>
    <scope>FUNCTION</scope>
</reference>
<dbReference type="EC" id="1.1.1.-" evidence="4"/>
<dbReference type="EMBL" id="CDMC01000024">
    <property type="protein sequence ID" value="CEL11259.1"/>
    <property type="molecule type" value="Genomic_DNA"/>
</dbReference>
<dbReference type="SMR" id="A0A0U5GGX2"/>
<dbReference type="STRING" id="454130.A0A0U5GGX2"/>
<dbReference type="OMA" id="EHIEINP"/>
<dbReference type="OrthoDB" id="1731983at2759"/>
<dbReference type="UniPathway" id="UPA00213"/>
<dbReference type="Proteomes" id="UP000054771">
    <property type="component" value="Unassembled WGS sequence"/>
</dbReference>
<dbReference type="GO" id="GO:0016491">
    <property type="term" value="F:oxidoreductase activity"/>
    <property type="evidence" value="ECO:0007669"/>
    <property type="project" value="UniProtKB-KW"/>
</dbReference>
<dbReference type="GO" id="GO:0016114">
    <property type="term" value="P:terpenoid biosynthetic process"/>
    <property type="evidence" value="ECO:0007669"/>
    <property type="project" value="UniProtKB-UniPathway"/>
</dbReference>
<dbReference type="CDD" id="cd08948">
    <property type="entry name" value="5beta-POR_like_SDR_a"/>
    <property type="match status" value="1"/>
</dbReference>
<dbReference type="Gene3D" id="3.40.50.720">
    <property type="entry name" value="NAD(P)-binding Rossmann-like Domain"/>
    <property type="match status" value="1"/>
</dbReference>
<dbReference type="InterPro" id="IPR036291">
    <property type="entry name" value="NAD(P)-bd_dom_sf"/>
</dbReference>
<dbReference type="InterPro" id="IPR055222">
    <property type="entry name" value="PRISE-like_Rossmann-fold"/>
</dbReference>
<dbReference type="PANTHER" id="PTHR32487">
    <property type="entry name" value="3-OXO-DELTA(4,5)-STEROID 5-BETA-REDUCTASE"/>
    <property type="match status" value="1"/>
</dbReference>
<dbReference type="PANTHER" id="PTHR32487:SF8">
    <property type="entry name" value="NAD-DEPENDENT EPIMERASE_DEHYDRATASE DOMAIN-CONTAINING PROTEIN"/>
    <property type="match status" value="1"/>
</dbReference>
<dbReference type="Pfam" id="PF22917">
    <property type="entry name" value="PRISE"/>
    <property type="match status" value="1"/>
</dbReference>
<dbReference type="SUPFAM" id="SSF51735">
    <property type="entry name" value="NAD(P)-binding Rossmann-fold domains"/>
    <property type="match status" value="1"/>
</dbReference>
<gene>
    <name evidence="6" type="primary">ausT</name>
    <name type="ORF">ASPCAL14362</name>
</gene>
<sequence>MVDKSNKVALVLGATGISGWALAKNALSYPSRSTFQRVIGLMHRPRTVEETGLPNDPRLELYSGVDLQGDLNHVVVKLKEKIPRIEEVTHVYYLAYMTLQTCSGDMRQFRDANVAMTYTAVHACDRLCPNMEFFVLQTGTNAYGVACFDYLRQTQLQVPLRESNPRVPRPWSDTLFYYAQADLIKEANKGKAWKWCEVRPDQIVGHTPAQVSVPYVAPMALYLALYRYINGPGARVQFPGTVRNYHHTYTDVRPDTMARAELYLSLVKSDESHGEAFNIADTDTPGPWSAKWPSICRYFGLEASETIDDEWTDIDGWWYANQTAYERMCAEYGLQKQVMSPTAWSLMKMGHTLIDQNRELCLDKIRGLGFTEDHPVGSSYFQVFEDFERMKIIPPKVVLASPRCRDVLHQC</sequence>
<keyword id="KW-0521">NADP</keyword>
<keyword id="KW-0560">Oxidoreductase</keyword>
<keyword id="KW-1185">Reference proteome</keyword>
<organism>
    <name type="scientific">Aspergillus calidoustus</name>
    <dbReference type="NCBI Taxonomy" id="454130"/>
    <lineage>
        <taxon>Eukaryota</taxon>
        <taxon>Fungi</taxon>
        <taxon>Dikarya</taxon>
        <taxon>Ascomycota</taxon>
        <taxon>Pezizomycotina</taxon>
        <taxon>Eurotiomycetes</taxon>
        <taxon>Eurotiomycetidae</taxon>
        <taxon>Eurotiales</taxon>
        <taxon>Aspergillaceae</taxon>
        <taxon>Aspergillus</taxon>
        <taxon>Aspergillus subgen. Nidulantes</taxon>
    </lineage>
</organism>
<name>AUST_ASPCI</name>
<proteinExistence type="evidence at protein level"/>